<evidence type="ECO:0000250" key="1">
    <source>
        <dbReference type="UniProtKB" id="Q09924"/>
    </source>
</evidence>
<evidence type="ECO:0000250" key="2">
    <source>
        <dbReference type="UniProtKB" id="Q9UI10"/>
    </source>
</evidence>
<evidence type="ECO:0000256" key="3">
    <source>
        <dbReference type="SAM" id="MobiDB-lite"/>
    </source>
</evidence>
<evidence type="ECO:0000305" key="4"/>
<comment type="function">
    <text evidence="2">Acts as a component of the translation initiation factor 2B (eIF2B) complex, which catalyzes the exchange of GDP for GTP on eukaryotic initiation factor 2 (eIF2) gamma subunit. Its guanine nucleotide exchange factor activity is repressed when bound to eIF2 complex phosphorylated on the alpha subunit, thereby limiting the amount of methionyl-initiator methionine tRNA available to the ribosome and consequently global translation is repressed.</text>
</comment>
<comment type="activity regulation">
    <text evidence="2">Activated by the chemical integrated stress response (ISR) inhibitor ISRIB which stimulates guanine nucleotide exchange factor activity for both phosphorylated and unphosphorylated eIF2.</text>
</comment>
<comment type="subunit">
    <text evidence="2">Component of the translation initiation factor 2B (eIF2B) complex which is a heterodecamer of two sets of five different subunits: alpha, beta, gamma, delta and epsilon. Subunits alpha, beta and delta comprise a regulatory subcomplex and subunits epsilon and gamma comprise a catalytic subcomplex. Within the complex, the hexameric regulatory complex resides at the center, with the two heterodimeric catalytic subcomplexes bound on opposite sides.</text>
</comment>
<comment type="subcellular location">
    <subcellularLocation>
        <location evidence="1">Cytoplasm</location>
        <location evidence="1">Cytosol</location>
    </subcellularLocation>
</comment>
<comment type="similarity">
    <text evidence="4">Belongs to the eIF-2B alpha/beta/delta subunits family.</text>
</comment>
<organism>
    <name type="scientific">Bos taurus</name>
    <name type="common">Bovine</name>
    <dbReference type="NCBI Taxonomy" id="9913"/>
    <lineage>
        <taxon>Eukaryota</taxon>
        <taxon>Metazoa</taxon>
        <taxon>Chordata</taxon>
        <taxon>Craniata</taxon>
        <taxon>Vertebrata</taxon>
        <taxon>Euteleostomi</taxon>
        <taxon>Mammalia</taxon>
        <taxon>Eutheria</taxon>
        <taxon>Laurasiatheria</taxon>
        <taxon>Artiodactyla</taxon>
        <taxon>Ruminantia</taxon>
        <taxon>Pecora</taxon>
        <taxon>Bovidae</taxon>
        <taxon>Bovinae</taxon>
        <taxon>Bos</taxon>
    </lineage>
</organism>
<sequence>MATAAVAVREDSGSGMKAELAPRPGAEGREMTQEEKLQLRKEKKQQKKKRKEEKGTETETGSAVSAAQCQVGPAKHLAGPDSQLGTAKEKVPAGRSKAELRAERRAKQEAERAMKQARKGDQGGPPPQACPSTAGETPSGVKRLPEHSQVDDPTLLRRLVKKPERQQVPTRKDYGSKVSLFSHLPQYSRQNSLTQFMSIPSSVIHPAMVRLGLQYSQGLVSGSNARCIALLRALQQVIQDYTTPPSEELSRDLVNKLKPYFSFLTQCRPLSASMYNAIKLLNKEITGVSGSKREEEAKSELRAAIDRYIKEKIVLAAQAISRFAYKKISNGDVILVYGCSSLVSHILQEAWAKGRQFRVVVVDSRPRLEAKHTLRSLVRAGVPASYLLIPAASYVLPEVSKVLLGAHALLANGSVMSRVGTAQLALVARAHNVPVLVCCETYKFCERVQTDAFVSNELDDPDDLLCERGEHVALANWQNHSSLRLLNLVYDVTPPELVDLVITELGMIPCSSVPVVLRVKSSDQ</sequence>
<dbReference type="EMBL" id="BC102555">
    <property type="protein sequence ID" value="AAI02556.1"/>
    <property type="molecule type" value="mRNA"/>
</dbReference>
<dbReference type="RefSeq" id="NP_001029716.1">
    <property type="nucleotide sequence ID" value="NM_001034544.2"/>
</dbReference>
<dbReference type="SMR" id="Q3T058"/>
<dbReference type="FunCoup" id="Q3T058">
    <property type="interactions" value="3698"/>
</dbReference>
<dbReference type="STRING" id="9913.ENSBTAP00000025991"/>
<dbReference type="PaxDb" id="9913-ENSBTAP00000025991"/>
<dbReference type="GeneID" id="521926"/>
<dbReference type="KEGG" id="bta:521926"/>
<dbReference type="CTD" id="8890"/>
<dbReference type="eggNOG" id="KOG1467">
    <property type="taxonomic scope" value="Eukaryota"/>
</dbReference>
<dbReference type="InParanoid" id="Q3T058"/>
<dbReference type="OrthoDB" id="10254737at2759"/>
<dbReference type="Proteomes" id="UP000009136">
    <property type="component" value="Unplaced"/>
</dbReference>
<dbReference type="GO" id="GO:0005737">
    <property type="term" value="C:cytoplasm"/>
    <property type="evidence" value="ECO:0000250"/>
    <property type="project" value="UniProtKB"/>
</dbReference>
<dbReference type="GO" id="GO:0005829">
    <property type="term" value="C:cytosol"/>
    <property type="evidence" value="ECO:0007669"/>
    <property type="project" value="UniProtKB-SubCell"/>
</dbReference>
<dbReference type="GO" id="GO:0005851">
    <property type="term" value="C:eukaryotic translation initiation factor 2B complex"/>
    <property type="evidence" value="ECO:0000250"/>
    <property type="project" value="UniProtKB"/>
</dbReference>
<dbReference type="GO" id="GO:0005085">
    <property type="term" value="F:guanyl-nucleotide exchange factor activity"/>
    <property type="evidence" value="ECO:0000250"/>
    <property type="project" value="UniProtKB"/>
</dbReference>
<dbReference type="GO" id="GO:0003743">
    <property type="term" value="F:translation initiation factor activity"/>
    <property type="evidence" value="ECO:0007669"/>
    <property type="project" value="UniProtKB-KW"/>
</dbReference>
<dbReference type="GO" id="GO:0002183">
    <property type="term" value="P:cytoplasmic translational initiation"/>
    <property type="evidence" value="ECO:0000250"/>
    <property type="project" value="UniProtKB"/>
</dbReference>
<dbReference type="GO" id="GO:0042552">
    <property type="term" value="P:myelination"/>
    <property type="evidence" value="ECO:0000250"/>
    <property type="project" value="UniProtKB"/>
</dbReference>
<dbReference type="GO" id="GO:0014003">
    <property type="term" value="P:oligodendrocyte development"/>
    <property type="evidence" value="ECO:0000250"/>
    <property type="project" value="UniProtKB"/>
</dbReference>
<dbReference type="GO" id="GO:0001541">
    <property type="term" value="P:ovarian follicle development"/>
    <property type="evidence" value="ECO:0000250"/>
    <property type="project" value="UniProtKB"/>
</dbReference>
<dbReference type="GO" id="GO:0050852">
    <property type="term" value="P:T cell receptor signaling pathway"/>
    <property type="evidence" value="ECO:0000250"/>
    <property type="project" value="UniProtKB"/>
</dbReference>
<dbReference type="GO" id="GO:0006413">
    <property type="term" value="P:translational initiation"/>
    <property type="evidence" value="ECO:0000250"/>
    <property type="project" value="UniProtKB"/>
</dbReference>
<dbReference type="FunFam" id="3.40.50.10470:FF:000002">
    <property type="entry name" value="Probable translation initiation factor eIF-2B subunit delta"/>
    <property type="match status" value="1"/>
</dbReference>
<dbReference type="Gene3D" id="3.40.50.10470">
    <property type="entry name" value="Translation initiation factor eif-2b, domain 2"/>
    <property type="match status" value="1"/>
</dbReference>
<dbReference type="InterPro" id="IPR000649">
    <property type="entry name" value="IF-2B-related"/>
</dbReference>
<dbReference type="InterPro" id="IPR042529">
    <property type="entry name" value="IF_2B-like_C"/>
</dbReference>
<dbReference type="InterPro" id="IPR037171">
    <property type="entry name" value="NagB/RpiA_transferase-like"/>
</dbReference>
<dbReference type="PANTHER" id="PTHR10233">
    <property type="entry name" value="TRANSLATION INITIATION FACTOR EIF-2B"/>
    <property type="match status" value="1"/>
</dbReference>
<dbReference type="PANTHER" id="PTHR10233:SF14">
    <property type="entry name" value="TRANSLATION INITIATION FACTOR EIF-2B SUBUNIT DELTA"/>
    <property type="match status" value="1"/>
</dbReference>
<dbReference type="Pfam" id="PF01008">
    <property type="entry name" value="IF-2B"/>
    <property type="match status" value="1"/>
</dbReference>
<dbReference type="SUPFAM" id="SSF100950">
    <property type="entry name" value="NagB/RpiA/CoA transferase-like"/>
    <property type="match status" value="1"/>
</dbReference>
<reference key="1">
    <citation type="submission" date="2005-08" db="EMBL/GenBank/DDBJ databases">
        <authorList>
            <consortium name="NIH - Mammalian Gene Collection (MGC) project"/>
        </authorList>
    </citation>
    <scope>NUCLEOTIDE SEQUENCE [LARGE SCALE MRNA]</scope>
    <source>
        <strain>Hereford</strain>
        <tissue>Testis</tissue>
    </source>
</reference>
<protein>
    <recommendedName>
        <fullName>Translation initiation factor eIF2B subunit delta</fullName>
    </recommendedName>
    <alternativeName>
        <fullName>eIF2B GDP-GTP exchange factor subunit delta</fullName>
    </alternativeName>
</protein>
<proteinExistence type="evidence at transcript level"/>
<feature type="initiator methionine" description="Removed" evidence="2">
    <location>
        <position position="1"/>
    </location>
</feature>
<feature type="chain" id="PRO_0000317332" description="Translation initiation factor eIF2B subunit delta">
    <location>
        <begin position="2"/>
        <end position="524"/>
    </location>
</feature>
<feature type="region of interest" description="Disordered" evidence="3">
    <location>
        <begin position="1"/>
        <end position="173"/>
    </location>
</feature>
<feature type="region of interest" description="May bind the chemical integrated stress response (ISR) inhibitor ISRIB" evidence="2">
    <location>
        <begin position="171"/>
        <end position="180"/>
    </location>
</feature>
<feature type="compositionally biased region" description="Basic and acidic residues" evidence="3">
    <location>
        <begin position="26"/>
        <end position="40"/>
    </location>
</feature>
<feature type="compositionally biased region" description="Basic residues" evidence="3">
    <location>
        <begin position="41"/>
        <end position="51"/>
    </location>
</feature>
<feature type="compositionally biased region" description="Basic and acidic residues" evidence="3">
    <location>
        <begin position="87"/>
        <end position="121"/>
    </location>
</feature>
<feature type="compositionally biased region" description="Basic and acidic residues" evidence="3">
    <location>
        <begin position="161"/>
        <end position="173"/>
    </location>
</feature>
<feature type="modified residue" description="N-acetylalanine" evidence="2">
    <location>
        <position position="2"/>
    </location>
</feature>
<feature type="modified residue" description="Phosphoserine" evidence="2">
    <location>
        <position position="12"/>
    </location>
</feature>
<feature type="modified residue" description="Phosphothreonine" evidence="2">
    <location>
        <position position="86"/>
    </location>
</feature>
<name>EI2BD_BOVIN</name>
<gene>
    <name type="primary">EIF2B4</name>
</gene>
<keyword id="KW-0007">Acetylation</keyword>
<keyword id="KW-0963">Cytoplasm</keyword>
<keyword id="KW-0396">Initiation factor</keyword>
<keyword id="KW-0597">Phosphoprotein</keyword>
<keyword id="KW-0648">Protein biosynthesis</keyword>
<keyword id="KW-1185">Reference proteome</keyword>
<accession>Q3T058</accession>